<dbReference type="EMBL" id="M21976">
    <property type="protein sequence ID" value="AAA21931.1"/>
    <property type="molecule type" value="Genomic_DNA"/>
</dbReference>
<dbReference type="PIR" id="A32347">
    <property type="entry name" value="A32347"/>
</dbReference>
<dbReference type="SMR" id="P12616"/>
<dbReference type="GO" id="GO:0005576">
    <property type="term" value="C:extracellular region"/>
    <property type="evidence" value="ECO:0007669"/>
    <property type="project" value="UniProtKB-KW"/>
</dbReference>
<dbReference type="GO" id="GO:0009289">
    <property type="term" value="C:pilus"/>
    <property type="evidence" value="ECO:0007669"/>
    <property type="project" value="UniProtKB-SubCell"/>
</dbReference>
<dbReference type="GO" id="GO:0005975">
    <property type="term" value="P:carbohydrate metabolic process"/>
    <property type="evidence" value="ECO:0007669"/>
    <property type="project" value="UniProtKB-ARBA"/>
</dbReference>
<dbReference type="Gene3D" id="2.60.40.740">
    <property type="match status" value="1"/>
</dbReference>
<dbReference type="Gene3D" id="2.60.40.10">
    <property type="entry name" value="Immunoglobulins"/>
    <property type="match status" value="2"/>
</dbReference>
<dbReference type="InterPro" id="IPR026466">
    <property type="entry name" value="Fim_isopep_form_D2_dom"/>
</dbReference>
<dbReference type="InterPro" id="IPR048052">
    <property type="entry name" value="FM1-like"/>
</dbReference>
<dbReference type="InterPro" id="IPR032364">
    <property type="entry name" value="GramPos_pilinD1_N"/>
</dbReference>
<dbReference type="InterPro" id="IPR013783">
    <property type="entry name" value="Ig-like_fold"/>
</dbReference>
<dbReference type="InterPro" id="IPR019931">
    <property type="entry name" value="LPXTG_anchor"/>
</dbReference>
<dbReference type="InterPro" id="IPR046473">
    <property type="entry name" value="Sgo0707-like_N2"/>
</dbReference>
<dbReference type="InterPro" id="IPR041033">
    <property type="entry name" value="SpaA_PFL_dom_1"/>
</dbReference>
<dbReference type="NCBIfam" id="NF033902">
    <property type="entry name" value="iso_D2_wall_anc"/>
    <property type="match status" value="1"/>
</dbReference>
<dbReference type="NCBIfam" id="TIGR01167">
    <property type="entry name" value="LPXTG_anchor"/>
    <property type="match status" value="1"/>
</dbReference>
<dbReference type="NCBIfam" id="TIGR04226">
    <property type="entry name" value="RrgB_K2N_iso_D2"/>
    <property type="match status" value="1"/>
</dbReference>
<dbReference type="Pfam" id="PF00746">
    <property type="entry name" value="Gram_pos_anchor"/>
    <property type="match status" value="1"/>
</dbReference>
<dbReference type="Pfam" id="PF16555">
    <property type="entry name" value="GramPos_pilinD1"/>
    <property type="match status" value="1"/>
</dbReference>
<dbReference type="Pfam" id="PF20623">
    <property type="entry name" value="Sgo0707_N2"/>
    <property type="match status" value="1"/>
</dbReference>
<dbReference type="Pfam" id="PF17802">
    <property type="entry name" value="SpaA"/>
    <property type="match status" value="1"/>
</dbReference>
<dbReference type="PROSITE" id="PS50847">
    <property type="entry name" value="GRAM_POS_ANCHORING"/>
    <property type="match status" value="1"/>
</dbReference>
<reference key="1">
    <citation type="journal article" date="1988" name="J. Bacteriol.">
        <title>Cloning and nucleotide sequence of a gene for Actinomyces naeslundii WVU45 type 2 fimbriae.</title>
        <authorList>
            <person name="Yeung M.K."/>
            <person name="Cisar J.O."/>
        </authorList>
    </citation>
    <scope>NUCLEOTIDE SEQUENCE [GENOMIC DNA]</scope>
    <source>
        <strain>WVU45</strain>
    </source>
</reference>
<sequence length="534" mass="56574">MKYNTSTLGRRAAAAAGVLTLAVLGLAPMAQAENANHGDINTEALGSLTIHKHLNGDGNPIGAPDGTASNDDGKGAPVSGVQFTAYEINGIDLKTSEGWAKVNALTNTGAIPDNACANPGQPTLPNYTFRSSRVSGDTDRDGEAKIESLPVKAYLVCETKTPGNIVQKAKPFVVTIPHPNTAAKADGTWLYDVHVYPKNEKIEVAKTIEDQRNNGYIVGSKVRFPVSSTLPKLDDNSYYKYYQFKDTLDNRLKQVTATDVTLGGTRLDEGTDYTLGTDGQTVTVTFNQNGLSKLKGNPGQKLQAVFEGVVSEVGDGSINNTAQLISDTTYAEQPPAPETPPANPDNPPTTEQVTSKWGDLTIKKVDGNDRSGDKDGLKGAEFQIYKAKDAYADTCSPEADGQPLTINGESTFTTGEGGTINFKALFVSDSVQDTGRDNRVDAPHRCYVLVETKAPAGYVLPADASRAITVEPGAGVTQQVVIDNVKQSVPGLPLTGANGMLILTASGAALLMIAVGSVLVARYRERKRNRDLAA</sequence>
<organism>
    <name type="scientific">Actinomyces naeslundii</name>
    <dbReference type="NCBI Taxonomy" id="1655"/>
    <lineage>
        <taxon>Bacteria</taxon>
        <taxon>Bacillati</taxon>
        <taxon>Actinomycetota</taxon>
        <taxon>Actinomycetes</taxon>
        <taxon>Actinomycetales</taxon>
        <taxon>Actinomycetaceae</taxon>
        <taxon>Actinomyces</taxon>
    </lineage>
</organism>
<proteinExistence type="inferred from homology"/>
<evidence type="ECO:0000255" key="1">
    <source>
        <dbReference type="PROSITE-ProRule" id="PRU00477"/>
    </source>
</evidence>
<evidence type="ECO:0000256" key="2">
    <source>
        <dbReference type="SAM" id="MobiDB-lite"/>
    </source>
</evidence>
<evidence type="ECO:0000305" key="3"/>
<keyword id="KW-0134">Cell wall</keyword>
<keyword id="KW-0281">Fimbrium</keyword>
<keyword id="KW-0572">Peptidoglycan-anchor</keyword>
<keyword id="KW-0964">Secreted</keyword>
<keyword id="KW-0732">Signal</keyword>
<protein>
    <recommendedName>
        <fullName>Fimbrial subunit type 2</fullName>
    </recommendedName>
</protein>
<comment type="function">
    <text>Major fimbrial subunit of A.naeslundii.</text>
</comment>
<comment type="subcellular location">
    <subcellularLocation>
        <location evidence="1">Secreted</location>
        <location evidence="1">Cell wall</location>
        <topology evidence="1">Peptidoglycan-anchor</topology>
    </subcellularLocation>
    <subcellularLocation>
        <location evidence="3">Fimbrium</location>
    </subcellularLocation>
</comment>
<feature type="signal peptide">
    <location>
        <begin position="1"/>
        <end position="32"/>
    </location>
</feature>
<feature type="chain" id="PRO_0000005603" description="Fimbrial subunit type 2">
    <location>
        <begin position="33"/>
        <end position="495"/>
    </location>
</feature>
<feature type="propeptide" id="PRO_0000005604" description="Removed by sortase" evidence="1">
    <location>
        <begin position="496"/>
        <end position="534"/>
    </location>
</feature>
<feature type="region of interest" description="Disordered" evidence="2">
    <location>
        <begin position="56"/>
        <end position="76"/>
    </location>
</feature>
<feature type="region of interest" description="Disordered" evidence="2">
    <location>
        <begin position="329"/>
        <end position="376"/>
    </location>
</feature>
<feature type="short sequence motif" description="LPXTG sorting signal" evidence="1">
    <location>
        <begin position="492"/>
        <end position="496"/>
    </location>
</feature>
<feature type="compositionally biased region" description="Pro residues" evidence="2">
    <location>
        <begin position="334"/>
        <end position="347"/>
    </location>
</feature>
<feature type="compositionally biased region" description="Basic and acidic residues" evidence="2">
    <location>
        <begin position="361"/>
        <end position="376"/>
    </location>
</feature>
<feature type="modified residue" description="Pentaglycyl murein peptidoglycan amidated threonine" evidence="1">
    <location>
        <position position="495"/>
    </location>
</feature>
<name>FM2_ACTNA</name>
<accession>P12616</accession>